<protein>
    <recommendedName>
        <fullName>SOSS complex subunit B2</fullName>
    </recommendedName>
    <alternativeName>
        <fullName>Nucleic acid-binding protein 1</fullName>
    </alternativeName>
    <alternativeName>
        <fullName>Oligonucleotide/oligosaccharide-binding fold-containing protein 2A</fullName>
    </alternativeName>
    <alternativeName>
        <fullName>Sensor of single-strand DNA complex subunit B2</fullName>
    </alternativeName>
    <alternativeName>
        <fullName>Sensor of ssDNA subunit B2</fullName>
        <shortName>SOSS-B2</shortName>
    </alternativeName>
    <alternativeName>
        <fullName>Single-stranded DNA-binding protein 2</fullName>
    </alternativeName>
</protein>
<comment type="function">
    <text evidence="1">Component of the SOSS complex, a multiprotein complex that functions downstream of the MRN complex to promote DNA repair and G2/M checkpoint. In the SOSS complex, acts as a sensor of single-stranded DNA that binds to single-stranded DNA, in particular to polypyrimidines. The SOSS complex associates with DNA lesions and influences diverse endpoints in the cellular DNA damage response including cell-cycle checkpoint activation, recombinational repair and maintenance of genomic stability. Required for efficient homologous recombination-dependent repair of double-strand breaks (DSBs) and ATM-dependent signaling pathways (By similarity).</text>
</comment>
<comment type="subunit">
    <text evidence="1">Component of the SOSS complex, composed of SOSS-B (SOSS-B1/NABP2 or SOSS-B2/NABP1), SOSS-A/INTS3 and SOSS-C/INIP. SOSS complexes containing SOSS-B1/NABP2 are more abundant than complexes containing SOSS-B2/NABP1 (By similarity).</text>
</comment>
<comment type="subcellular location">
    <subcellularLocation>
        <location evidence="1">Nucleus</location>
    </subcellularLocation>
    <text evidence="1">Localizes to nuclear foci following DNA damage.</text>
</comment>
<comment type="similarity">
    <text evidence="3">Belongs to the SOSS-B family. SOSS-B2 subfamily.</text>
</comment>
<proteinExistence type="evidence at transcript level"/>
<keyword id="KW-0227">DNA damage</keyword>
<keyword id="KW-0234">DNA repair</keyword>
<keyword id="KW-0238">DNA-binding</keyword>
<keyword id="KW-0539">Nucleus</keyword>
<keyword id="KW-1185">Reference proteome</keyword>
<dbReference type="EMBL" id="BC140638">
    <property type="protein sequence ID" value="AAI40639.1"/>
    <property type="molecule type" value="mRNA"/>
</dbReference>
<dbReference type="RefSeq" id="NP_001091593.1">
    <property type="nucleotide sequence ID" value="NM_001098124.1"/>
</dbReference>
<dbReference type="RefSeq" id="XP_015313759.1">
    <property type="nucleotide sequence ID" value="XM_015458273.1"/>
</dbReference>
<dbReference type="RefSeq" id="XP_015313764.1">
    <property type="nucleotide sequence ID" value="XM_015458278.1"/>
</dbReference>
<dbReference type="RefSeq" id="XP_015313765.1">
    <property type="nucleotide sequence ID" value="XM_015458279.1"/>
</dbReference>
<dbReference type="RefSeq" id="XP_024833233.1">
    <property type="nucleotide sequence ID" value="XM_024977465.2"/>
</dbReference>
<dbReference type="SMR" id="A5D7P8"/>
<dbReference type="FunCoup" id="A5D7P8">
    <property type="interactions" value="782"/>
</dbReference>
<dbReference type="STRING" id="9913.ENSBTAP00000064211"/>
<dbReference type="PaxDb" id="9913-ENSBTAP00000024821"/>
<dbReference type="GeneID" id="613474"/>
<dbReference type="KEGG" id="bta:613474"/>
<dbReference type="CTD" id="64859"/>
<dbReference type="VEuPathDB" id="HostDB:ENSBTAG00000018653"/>
<dbReference type="eggNOG" id="KOG3416">
    <property type="taxonomic scope" value="Eukaryota"/>
</dbReference>
<dbReference type="HOGENOM" id="CLU_102724_0_1_1"/>
<dbReference type="InParanoid" id="A5D7P8"/>
<dbReference type="OMA" id="AHGEQKN"/>
<dbReference type="OrthoDB" id="295715at2759"/>
<dbReference type="TreeFam" id="TF313902"/>
<dbReference type="Reactome" id="R-BTA-6807505">
    <property type="pathway name" value="RNA polymerase II transcribes snRNA genes"/>
</dbReference>
<dbReference type="Proteomes" id="UP000009136">
    <property type="component" value="Chromosome 2"/>
</dbReference>
<dbReference type="Bgee" id="ENSBTAG00000018653">
    <property type="expression patterns" value="Expressed in granulosa cell and 106 other cell types or tissues"/>
</dbReference>
<dbReference type="GO" id="GO:0070876">
    <property type="term" value="C:SOSS complex"/>
    <property type="evidence" value="ECO:0000318"/>
    <property type="project" value="GO_Central"/>
</dbReference>
<dbReference type="GO" id="GO:0003677">
    <property type="term" value="F:DNA binding"/>
    <property type="evidence" value="ECO:0000318"/>
    <property type="project" value="GO_Central"/>
</dbReference>
<dbReference type="GO" id="GO:0000724">
    <property type="term" value="P:double-strand break repair via homologous recombination"/>
    <property type="evidence" value="ECO:0000318"/>
    <property type="project" value="GO_Central"/>
</dbReference>
<dbReference type="GO" id="GO:0044818">
    <property type="term" value="P:mitotic G2/M transition checkpoint"/>
    <property type="evidence" value="ECO:0000318"/>
    <property type="project" value="GO_Central"/>
</dbReference>
<dbReference type="GO" id="GO:0010212">
    <property type="term" value="P:response to ionizing radiation"/>
    <property type="evidence" value="ECO:0000318"/>
    <property type="project" value="GO_Central"/>
</dbReference>
<dbReference type="CDD" id="cd04491">
    <property type="entry name" value="SoSSB_OBF"/>
    <property type="match status" value="1"/>
</dbReference>
<dbReference type="FunFam" id="2.40.50.140:FF:000072">
    <property type="entry name" value="SOSS complex subunit B2"/>
    <property type="match status" value="1"/>
</dbReference>
<dbReference type="Gene3D" id="2.40.50.140">
    <property type="entry name" value="Nucleic acid-binding proteins"/>
    <property type="match status" value="1"/>
</dbReference>
<dbReference type="InterPro" id="IPR012340">
    <property type="entry name" value="NA-bd_OB-fold"/>
</dbReference>
<dbReference type="InterPro" id="IPR051231">
    <property type="entry name" value="SOSS-B"/>
</dbReference>
<dbReference type="InterPro" id="IPR048970">
    <property type="entry name" value="Ssb-like_OB"/>
</dbReference>
<dbReference type="PANTHER" id="PTHR13356">
    <property type="entry name" value="OB FOLD NUCLEIC ACID BINDING PROTEIN-RELATED"/>
    <property type="match status" value="1"/>
</dbReference>
<dbReference type="PANTHER" id="PTHR13356:SF5">
    <property type="entry name" value="SOSS COMPLEX SUBUNIT B2"/>
    <property type="match status" value="1"/>
</dbReference>
<dbReference type="Pfam" id="PF21473">
    <property type="entry name" value="Ssb-like_OB"/>
    <property type="match status" value="1"/>
</dbReference>
<dbReference type="SUPFAM" id="SSF50249">
    <property type="entry name" value="Nucleic acid-binding proteins"/>
    <property type="match status" value="1"/>
</dbReference>
<name>SOSB2_BOVIN</name>
<reference key="1">
    <citation type="submission" date="2007-04" db="EMBL/GenBank/DDBJ databases">
        <authorList>
            <consortium name="NIH - Mammalian Gene Collection (MGC) project"/>
        </authorList>
    </citation>
    <scope>NUCLEOTIDE SEQUENCE [LARGE SCALE MRNA]</scope>
    <source>
        <strain>Hereford</strain>
        <tissue>Fetal liver</tissue>
    </source>
</reference>
<evidence type="ECO:0000250" key="1"/>
<evidence type="ECO:0000256" key="2">
    <source>
        <dbReference type="SAM" id="MobiDB-lite"/>
    </source>
</evidence>
<evidence type="ECO:0000305" key="3"/>
<accession>A5D7P8</accession>
<feature type="chain" id="PRO_0000333953" description="SOSS complex subunit B2">
    <location>
        <begin position="1"/>
        <end position="206"/>
    </location>
</feature>
<feature type="DNA-binding region" description="OB">
    <location>
        <begin position="26"/>
        <end position="89"/>
    </location>
</feature>
<feature type="region of interest" description="Disordered" evidence="2">
    <location>
        <begin position="114"/>
        <end position="146"/>
    </location>
</feature>
<feature type="region of interest" description="Disordered" evidence="2">
    <location>
        <begin position="166"/>
        <end position="206"/>
    </location>
</feature>
<feature type="compositionally biased region" description="Polar residues" evidence="2">
    <location>
        <begin position="181"/>
        <end position="196"/>
    </location>
</feature>
<gene>
    <name type="primary">NABP1</name>
    <name type="synonym">OBFC2A</name>
    <name type="synonym">SSB2</name>
</gene>
<organism>
    <name type="scientific">Bos taurus</name>
    <name type="common">Bovine</name>
    <dbReference type="NCBI Taxonomy" id="9913"/>
    <lineage>
        <taxon>Eukaryota</taxon>
        <taxon>Metazoa</taxon>
        <taxon>Chordata</taxon>
        <taxon>Craniata</taxon>
        <taxon>Vertebrata</taxon>
        <taxon>Euteleostomi</taxon>
        <taxon>Mammalia</taxon>
        <taxon>Eutheria</taxon>
        <taxon>Laurasiatheria</taxon>
        <taxon>Artiodactyla</taxon>
        <taxon>Ruminantia</taxon>
        <taxon>Pecora</taxon>
        <taxon>Bovidae</taxon>
        <taxon>Bovinae</taxon>
        <taxon>Bos</taxon>
    </lineage>
</organism>
<sequence length="206" mass="22449">MNGVRDPPLFIKDIKPGLKNLNVVFIVLEIGRVTKTKDGHEVRSCKVADKTGSITISVWDEIGGLIQPGDIIRLTRGYASMWKGCLTLYTGRGGELQKIGEFCMVYSELPNFSEPNPDYRGQQNKGAHNEQKNNSMNNSNNVGTGTFGPMGNGVQTGAEARGCQFSYAGRSNGRGPINPQLPGTANNQTVMTTISNGRDPRRAFKR</sequence>